<organism>
    <name type="scientific">Leifsonia xyli subsp. xyli (strain CTCB07)</name>
    <dbReference type="NCBI Taxonomy" id="281090"/>
    <lineage>
        <taxon>Bacteria</taxon>
        <taxon>Bacillati</taxon>
        <taxon>Actinomycetota</taxon>
        <taxon>Actinomycetes</taxon>
        <taxon>Micrococcales</taxon>
        <taxon>Microbacteriaceae</taxon>
        <taxon>Leifsonia</taxon>
    </lineage>
</organism>
<name>RPOA_LEIXX</name>
<protein>
    <recommendedName>
        <fullName evidence="1">DNA-directed RNA polymerase subunit alpha</fullName>
        <shortName evidence="1">RNAP subunit alpha</shortName>
        <ecNumber evidence="1">2.7.7.6</ecNumber>
    </recommendedName>
    <alternativeName>
        <fullName evidence="1">RNA polymerase subunit alpha</fullName>
    </alternativeName>
    <alternativeName>
        <fullName evidence="1">Transcriptase subunit alpha</fullName>
    </alternativeName>
</protein>
<accession>Q6AD21</accession>
<reference key="1">
    <citation type="journal article" date="2004" name="Mol. Plant Microbe Interact.">
        <title>The genome sequence of the Gram-positive sugarcane pathogen Leifsonia xyli subsp. xyli.</title>
        <authorList>
            <person name="Monteiro-Vitorello C.B."/>
            <person name="Camargo L.E.A."/>
            <person name="Van Sluys M.A."/>
            <person name="Kitajima J.P."/>
            <person name="Truffi D."/>
            <person name="do Amaral A.M."/>
            <person name="Harakava R."/>
            <person name="de Oliveira J.C.F."/>
            <person name="Wood D."/>
            <person name="de Oliveira M.C."/>
            <person name="Miyaki C.Y."/>
            <person name="Takita M.A."/>
            <person name="da Silva A.C.R."/>
            <person name="Furlan L.R."/>
            <person name="Carraro D.M."/>
            <person name="Camarotte G."/>
            <person name="Almeida N.F. Jr."/>
            <person name="Carrer H."/>
            <person name="Coutinho L.L."/>
            <person name="El-Dorry H.A."/>
            <person name="Ferro M.I.T."/>
            <person name="Gagliardi P.R."/>
            <person name="Giglioti E."/>
            <person name="Goldman M.H.S."/>
            <person name="Goldman G.H."/>
            <person name="Kimura E.T."/>
            <person name="Ferro E.S."/>
            <person name="Kuramae E.E."/>
            <person name="Lemos E.G.M."/>
            <person name="Lemos M.V.F."/>
            <person name="Mauro S.M.Z."/>
            <person name="Machado M.A."/>
            <person name="Marino C.L."/>
            <person name="Menck C.F."/>
            <person name="Nunes L.R."/>
            <person name="Oliveira R.C."/>
            <person name="Pereira G.G."/>
            <person name="Siqueira W."/>
            <person name="de Souza A.A."/>
            <person name="Tsai S.M."/>
            <person name="Zanca A.S."/>
            <person name="Simpson A.J.G."/>
            <person name="Brumbley S.M."/>
            <person name="Setubal J.C."/>
        </authorList>
    </citation>
    <scope>NUCLEOTIDE SEQUENCE [LARGE SCALE GENOMIC DNA]</scope>
    <source>
        <strain>CTCB07</strain>
    </source>
</reference>
<keyword id="KW-0240">DNA-directed RNA polymerase</keyword>
<keyword id="KW-0548">Nucleotidyltransferase</keyword>
<keyword id="KW-1185">Reference proteome</keyword>
<keyword id="KW-0804">Transcription</keyword>
<keyword id="KW-0808">Transferase</keyword>
<dbReference type="EC" id="2.7.7.6" evidence="1"/>
<dbReference type="EMBL" id="AE016822">
    <property type="protein sequence ID" value="AAT89723.1"/>
    <property type="status" value="ALT_INIT"/>
    <property type="molecule type" value="Genomic_DNA"/>
</dbReference>
<dbReference type="RefSeq" id="WP_041767718.1">
    <property type="nucleotide sequence ID" value="NC_006087.1"/>
</dbReference>
<dbReference type="SMR" id="Q6AD21"/>
<dbReference type="STRING" id="281090.Lxx20080"/>
<dbReference type="KEGG" id="lxx:Lxx20080"/>
<dbReference type="eggNOG" id="COG0202">
    <property type="taxonomic scope" value="Bacteria"/>
</dbReference>
<dbReference type="HOGENOM" id="CLU_053084_0_1_11"/>
<dbReference type="Proteomes" id="UP000001306">
    <property type="component" value="Chromosome"/>
</dbReference>
<dbReference type="GO" id="GO:0005737">
    <property type="term" value="C:cytoplasm"/>
    <property type="evidence" value="ECO:0007669"/>
    <property type="project" value="UniProtKB-ARBA"/>
</dbReference>
<dbReference type="GO" id="GO:0000428">
    <property type="term" value="C:DNA-directed RNA polymerase complex"/>
    <property type="evidence" value="ECO:0007669"/>
    <property type="project" value="UniProtKB-KW"/>
</dbReference>
<dbReference type="GO" id="GO:0003677">
    <property type="term" value="F:DNA binding"/>
    <property type="evidence" value="ECO:0007669"/>
    <property type="project" value="UniProtKB-UniRule"/>
</dbReference>
<dbReference type="GO" id="GO:0003899">
    <property type="term" value="F:DNA-directed RNA polymerase activity"/>
    <property type="evidence" value="ECO:0007669"/>
    <property type="project" value="UniProtKB-UniRule"/>
</dbReference>
<dbReference type="GO" id="GO:0046983">
    <property type="term" value="F:protein dimerization activity"/>
    <property type="evidence" value="ECO:0007669"/>
    <property type="project" value="InterPro"/>
</dbReference>
<dbReference type="GO" id="GO:0006351">
    <property type="term" value="P:DNA-templated transcription"/>
    <property type="evidence" value="ECO:0007669"/>
    <property type="project" value="UniProtKB-UniRule"/>
</dbReference>
<dbReference type="CDD" id="cd06928">
    <property type="entry name" value="RNAP_alpha_NTD"/>
    <property type="match status" value="1"/>
</dbReference>
<dbReference type="FunFam" id="1.10.150.20:FF:000001">
    <property type="entry name" value="DNA-directed RNA polymerase subunit alpha"/>
    <property type="match status" value="1"/>
</dbReference>
<dbReference type="FunFam" id="2.170.120.12:FF:000001">
    <property type="entry name" value="DNA-directed RNA polymerase subunit alpha"/>
    <property type="match status" value="1"/>
</dbReference>
<dbReference type="Gene3D" id="1.10.150.20">
    <property type="entry name" value="5' to 3' exonuclease, C-terminal subdomain"/>
    <property type="match status" value="1"/>
</dbReference>
<dbReference type="Gene3D" id="2.170.120.12">
    <property type="entry name" value="DNA-directed RNA polymerase, insert domain"/>
    <property type="match status" value="1"/>
</dbReference>
<dbReference type="Gene3D" id="3.30.1360.10">
    <property type="entry name" value="RNA polymerase, RBP11-like subunit"/>
    <property type="match status" value="1"/>
</dbReference>
<dbReference type="HAMAP" id="MF_00059">
    <property type="entry name" value="RNApol_bact_RpoA"/>
    <property type="match status" value="1"/>
</dbReference>
<dbReference type="InterPro" id="IPR011262">
    <property type="entry name" value="DNA-dir_RNA_pol_insert"/>
</dbReference>
<dbReference type="InterPro" id="IPR011263">
    <property type="entry name" value="DNA-dir_RNA_pol_RpoA/D/Rpb3"/>
</dbReference>
<dbReference type="InterPro" id="IPR011773">
    <property type="entry name" value="DNA-dir_RpoA"/>
</dbReference>
<dbReference type="InterPro" id="IPR036603">
    <property type="entry name" value="RBP11-like"/>
</dbReference>
<dbReference type="InterPro" id="IPR011260">
    <property type="entry name" value="RNAP_asu_C"/>
</dbReference>
<dbReference type="InterPro" id="IPR036643">
    <property type="entry name" value="RNApol_insert_sf"/>
</dbReference>
<dbReference type="NCBIfam" id="NF003513">
    <property type="entry name" value="PRK05182.1-2"/>
    <property type="match status" value="1"/>
</dbReference>
<dbReference type="NCBIfam" id="NF003514">
    <property type="entry name" value="PRK05182.1-4"/>
    <property type="match status" value="1"/>
</dbReference>
<dbReference type="NCBIfam" id="NF003519">
    <property type="entry name" value="PRK05182.2-5"/>
    <property type="match status" value="1"/>
</dbReference>
<dbReference type="NCBIfam" id="TIGR02027">
    <property type="entry name" value="rpoA"/>
    <property type="match status" value="1"/>
</dbReference>
<dbReference type="Pfam" id="PF01000">
    <property type="entry name" value="RNA_pol_A_bac"/>
    <property type="match status" value="1"/>
</dbReference>
<dbReference type="Pfam" id="PF03118">
    <property type="entry name" value="RNA_pol_A_CTD"/>
    <property type="match status" value="1"/>
</dbReference>
<dbReference type="Pfam" id="PF01193">
    <property type="entry name" value="RNA_pol_L"/>
    <property type="match status" value="1"/>
</dbReference>
<dbReference type="SMART" id="SM00662">
    <property type="entry name" value="RPOLD"/>
    <property type="match status" value="1"/>
</dbReference>
<dbReference type="SUPFAM" id="SSF47789">
    <property type="entry name" value="C-terminal domain of RNA polymerase alpha subunit"/>
    <property type="match status" value="1"/>
</dbReference>
<dbReference type="SUPFAM" id="SSF56553">
    <property type="entry name" value="Insert subdomain of RNA polymerase alpha subunit"/>
    <property type="match status" value="1"/>
</dbReference>
<dbReference type="SUPFAM" id="SSF55257">
    <property type="entry name" value="RBP11-like subunits of RNA polymerase"/>
    <property type="match status" value="1"/>
</dbReference>
<comment type="function">
    <text evidence="1">DNA-dependent RNA polymerase catalyzes the transcription of DNA into RNA using the four ribonucleoside triphosphates as substrates.</text>
</comment>
<comment type="catalytic activity">
    <reaction evidence="1">
        <text>RNA(n) + a ribonucleoside 5'-triphosphate = RNA(n+1) + diphosphate</text>
        <dbReference type="Rhea" id="RHEA:21248"/>
        <dbReference type="Rhea" id="RHEA-COMP:14527"/>
        <dbReference type="Rhea" id="RHEA-COMP:17342"/>
        <dbReference type="ChEBI" id="CHEBI:33019"/>
        <dbReference type="ChEBI" id="CHEBI:61557"/>
        <dbReference type="ChEBI" id="CHEBI:140395"/>
        <dbReference type="EC" id="2.7.7.6"/>
    </reaction>
</comment>
<comment type="subunit">
    <text evidence="1">Homodimer. The RNAP catalytic core consists of 2 alpha, 1 beta, 1 beta' and 1 omega subunit. When a sigma factor is associated with the core the holoenzyme is formed, which can initiate transcription.</text>
</comment>
<comment type="domain">
    <text evidence="1">The N-terminal domain is essential for RNAP assembly and basal transcription, whereas the C-terminal domain is involved in interaction with transcriptional regulators and with upstream promoter elements.</text>
</comment>
<comment type="similarity">
    <text evidence="1">Belongs to the RNA polymerase alpha chain family.</text>
</comment>
<comment type="sequence caution" evidence="2">
    <conflict type="erroneous initiation">
        <sequence resource="EMBL-CDS" id="AAT89723"/>
    </conflict>
</comment>
<evidence type="ECO:0000255" key="1">
    <source>
        <dbReference type="HAMAP-Rule" id="MF_00059"/>
    </source>
</evidence>
<evidence type="ECO:0000305" key="2"/>
<proteinExistence type="inferred from homology"/>
<sequence>MLIAQRPTLTEENISEFRSRFVIEPLEPGFGYTLGNSLRRTLLSSIPGAAVTSIRIDGVLHEFSTVPGVKEDVTEIILNIKGLVVSSEHDEPITAYLRKTGAGQVTAADISAPAGVEIHNPELVIATLNDKAKFEVELTIERGRGYVSAQQNRNEYSEAGQIPIDSIYSPVLKVTYRVEATRAGERTDFDRLVVDVETKPAISPRDAIASAGRTLVELFGLARELNSAAEGIEIGPAPVDQVLSSELSMPIEDLDLSVRSYNCLKREGINTVSELVSLSETQLMNIRNFGQKSVDEVKDKLTEMGLSLKDSVPGFDGAHFYSGYDEDESTTI</sequence>
<feature type="chain" id="PRO_0000175325" description="DNA-directed RNA polymerase subunit alpha">
    <location>
        <begin position="1"/>
        <end position="332"/>
    </location>
</feature>
<feature type="region of interest" description="Alpha N-terminal domain (alpha-NTD)" evidence="1">
    <location>
        <begin position="1"/>
        <end position="226"/>
    </location>
</feature>
<feature type="region of interest" description="Alpha C-terminal domain (alpha-CTD)" evidence="1">
    <location>
        <begin position="243"/>
        <end position="332"/>
    </location>
</feature>
<gene>
    <name evidence="1" type="primary">rpoA</name>
    <name type="ordered locus">Lxx20080</name>
</gene>